<dbReference type="EC" id="4.1.2.10"/>
<dbReference type="EMBL" id="AC008017">
    <property type="protein sequence ID" value="AAD55652.1"/>
    <property type="molecule type" value="Genomic_DNA"/>
</dbReference>
<dbReference type="EMBL" id="CP002684">
    <property type="protein sequence ID" value="AEE35408.1"/>
    <property type="molecule type" value="Genomic_DNA"/>
</dbReference>
<dbReference type="EMBL" id="DQ446423">
    <property type="protein sequence ID" value="ABE65766.1"/>
    <property type="molecule type" value="mRNA"/>
</dbReference>
<dbReference type="PIR" id="A96756">
    <property type="entry name" value="A96756"/>
</dbReference>
<dbReference type="RefSeq" id="NP_177448.1">
    <property type="nucleotide sequence ID" value="NM_105963.1"/>
</dbReference>
<dbReference type="SMR" id="Q9SSM2"/>
<dbReference type="FunCoup" id="Q9SSM2">
    <property type="interactions" value="414"/>
</dbReference>
<dbReference type="STRING" id="3702.Q9SSM2"/>
<dbReference type="GlyGen" id="Q9SSM2">
    <property type="glycosylation" value="4 sites"/>
</dbReference>
<dbReference type="iPTMnet" id="Q9SSM2"/>
<dbReference type="PaxDb" id="3702-AT1G73050.1"/>
<dbReference type="ProteomicsDB" id="228870"/>
<dbReference type="EnsemblPlants" id="AT1G73050.1">
    <property type="protein sequence ID" value="AT1G73050.1"/>
    <property type="gene ID" value="AT1G73050"/>
</dbReference>
<dbReference type="GeneID" id="843636"/>
<dbReference type="Gramene" id="AT1G73050.1">
    <property type="protein sequence ID" value="AT1G73050.1"/>
    <property type="gene ID" value="AT1G73050"/>
</dbReference>
<dbReference type="KEGG" id="ath:AT1G73050"/>
<dbReference type="Araport" id="AT1G73050"/>
<dbReference type="TAIR" id="AT1G73050"/>
<dbReference type="eggNOG" id="KOG1238">
    <property type="taxonomic scope" value="Eukaryota"/>
</dbReference>
<dbReference type="HOGENOM" id="CLU_026750_0_0_1"/>
<dbReference type="InParanoid" id="Q9SSM2"/>
<dbReference type="OMA" id="TQKHGER"/>
<dbReference type="OrthoDB" id="269227at2759"/>
<dbReference type="PhylomeDB" id="Q9SSM2"/>
<dbReference type="BioCyc" id="ARA:AT1G73050-MONOMER"/>
<dbReference type="PRO" id="PR:Q9SSM2"/>
<dbReference type="Proteomes" id="UP000006548">
    <property type="component" value="Chromosome 1"/>
</dbReference>
<dbReference type="ExpressionAtlas" id="Q9SSM2">
    <property type="expression patterns" value="baseline and differential"/>
</dbReference>
<dbReference type="GO" id="GO:0050660">
    <property type="term" value="F:flavin adenine dinucleotide binding"/>
    <property type="evidence" value="ECO:0007669"/>
    <property type="project" value="InterPro"/>
</dbReference>
<dbReference type="GO" id="GO:0046593">
    <property type="term" value="F:mandelonitrile lyase activity"/>
    <property type="evidence" value="ECO:0007669"/>
    <property type="project" value="UniProtKB-EC"/>
</dbReference>
<dbReference type="GO" id="GO:0016614">
    <property type="term" value="F:oxidoreductase activity, acting on CH-OH group of donors"/>
    <property type="evidence" value="ECO:0007669"/>
    <property type="project" value="InterPro"/>
</dbReference>
<dbReference type="Gene3D" id="3.30.410.40">
    <property type="match status" value="1"/>
</dbReference>
<dbReference type="Gene3D" id="3.50.50.60">
    <property type="entry name" value="FAD/NAD(P)-binding domain"/>
    <property type="match status" value="1"/>
</dbReference>
<dbReference type="InterPro" id="IPR036188">
    <property type="entry name" value="FAD/NAD-bd_sf"/>
</dbReference>
<dbReference type="InterPro" id="IPR051871">
    <property type="entry name" value="GMC_Oxidoreductase-Related"/>
</dbReference>
<dbReference type="InterPro" id="IPR012132">
    <property type="entry name" value="GMC_OxRdtase"/>
</dbReference>
<dbReference type="InterPro" id="IPR000172">
    <property type="entry name" value="GMC_OxRdtase_N"/>
</dbReference>
<dbReference type="InterPro" id="IPR007867">
    <property type="entry name" value="GMC_OxRtase_C"/>
</dbReference>
<dbReference type="PANTHER" id="PTHR45968:SF2">
    <property type="entry name" value="(R)-MANDELONITRILE LYASE-LIKE"/>
    <property type="match status" value="1"/>
</dbReference>
<dbReference type="PANTHER" id="PTHR45968">
    <property type="entry name" value="OSJNBA0019K04.7 PROTEIN"/>
    <property type="match status" value="1"/>
</dbReference>
<dbReference type="Pfam" id="PF05199">
    <property type="entry name" value="GMC_oxred_C"/>
    <property type="match status" value="1"/>
</dbReference>
<dbReference type="Pfam" id="PF00732">
    <property type="entry name" value="GMC_oxred_N"/>
    <property type="match status" value="1"/>
</dbReference>
<dbReference type="PIRSF" id="PIRSF000137">
    <property type="entry name" value="Alcohol_oxidase"/>
    <property type="match status" value="1"/>
</dbReference>
<dbReference type="SUPFAM" id="SSF54373">
    <property type="entry name" value="FAD-linked reductases, C-terminal domain"/>
    <property type="match status" value="1"/>
</dbReference>
<dbReference type="SUPFAM" id="SSF51905">
    <property type="entry name" value="FAD/NAD(P)-binding domain"/>
    <property type="match status" value="1"/>
</dbReference>
<dbReference type="PROSITE" id="PS00623">
    <property type="entry name" value="GMC_OXRED_1"/>
    <property type="match status" value="1"/>
</dbReference>
<dbReference type="PROSITE" id="PS00624">
    <property type="entry name" value="GMC_OXRED_2"/>
    <property type="match status" value="1"/>
</dbReference>
<protein>
    <recommendedName>
        <fullName>(R)-mandelonitrile lyase-like</fullName>
        <ecNumber>4.1.2.10</ecNumber>
    </recommendedName>
    <alternativeName>
        <fullName>Hydroxynitrile lyase-like</fullName>
        <shortName>(R)-oxynitrilase-like</shortName>
    </alternativeName>
</protein>
<keyword id="KW-0274">FAD</keyword>
<keyword id="KW-0285">Flavoprotein</keyword>
<keyword id="KW-0325">Glycoprotein</keyword>
<keyword id="KW-0456">Lyase</keyword>
<keyword id="KW-1185">Reference proteome</keyword>
<keyword id="KW-0732">Signal</keyword>
<organism>
    <name type="scientific">Arabidopsis thaliana</name>
    <name type="common">Mouse-ear cress</name>
    <dbReference type="NCBI Taxonomy" id="3702"/>
    <lineage>
        <taxon>Eukaryota</taxon>
        <taxon>Viridiplantae</taxon>
        <taxon>Streptophyta</taxon>
        <taxon>Embryophyta</taxon>
        <taxon>Tracheophyta</taxon>
        <taxon>Spermatophyta</taxon>
        <taxon>Magnoliopsida</taxon>
        <taxon>eudicotyledons</taxon>
        <taxon>Gunneridae</taxon>
        <taxon>Pentapetalae</taxon>
        <taxon>rosids</taxon>
        <taxon>malvids</taxon>
        <taxon>Brassicales</taxon>
        <taxon>Brassicaceae</taxon>
        <taxon>Camelineae</taxon>
        <taxon>Arabidopsis</taxon>
    </lineage>
</organism>
<proteinExistence type="evidence at transcript level"/>
<feature type="signal peptide" evidence="3">
    <location>
        <begin position="1"/>
        <end position="28"/>
    </location>
</feature>
<feature type="chain" id="PRO_0000412562" description="(R)-mandelonitrile lyase-like">
    <location>
        <begin position="29"/>
        <end position="552"/>
    </location>
</feature>
<feature type="active site" description="Proton acceptor" evidence="2">
    <location>
        <position position="492"/>
    </location>
</feature>
<feature type="binding site" evidence="1">
    <location>
        <begin position="55"/>
        <end position="82"/>
    </location>
    <ligand>
        <name>FAD</name>
        <dbReference type="ChEBI" id="CHEBI:57692"/>
    </ligand>
</feature>
<feature type="glycosylation site" description="N-linked (GlcNAc...) asparagine" evidence="3">
    <location>
        <position position="44"/>
    </location>
</feature>
<feature type="glycosylation site" description="N-linked (GlcNAc...) asparagine" evidence="3">
    <location>
        <position position="162"/>
    </location>
</feature>
<feature type="glycosylation site" description="N-linked (GlcNAc...) asparagine" evidence="3">
    <location>
        <position position="259"/>
    </location>
</feature>
<feature type="glycosylation site" description="N-linked (GlcNAc...) asparagine" evidence="3">
    <location>
        <position position="434"/>
    </location>
</feature>
<feature type="sequence conflict" description="In Ref. 3; ABE65766." evidence="4" ref="3">
    <original>G</original>
    <variation>R</variation>
    <location>
        <position position="257"/>
    </location>
</feature>
<sequence length="552" mass="60783">MTKRIDSSLLYTALVVLLLLGVVHRSNARPRVNRPPGFMRFISNATDFASEDYYDYIIVGGGTAGCPLAATLSQSFRVLLLERGGVPYNRPNVMSHDGFLTTLTDVNNFDSPAQSFISEEGVPNARGRVLGGSSAINAGFYSRADKQFFENSGLVWDLSSVNQSYEWVERAIVFRPQLRTWQTAIRDALLEVGVHPFNGFTLEHKVGTKIGGSTFDRTGRRHSSADLLRYARSSNIRVAVYATVERVLLASSPSVSGSNVSAIGVVYRDQLGRFHHALIRDRGEVILSAGALGSPQLLFLSGIGPRSYLSTWGIPVALDQPHVGDFVYDNPRNGISIVPPVPMENSLIQVVGVTEDGAFLEAASNVIPFASPLHSVFIRAPASPLYVPVTTIMEKILGPVSIGLLRLASTDVRINPVVRFNYFSDPQDLERCVNGTRKIGEILRSRAMQDFMIREWFGNRRFRFVGAPLPVDQSNDLVMADFCRRTVSTIWHYHGGAVVGKVVDSDLKVIGVNSLRLVDGSTFNISPGTNPQATLMMLGRYMGLKMLRERMR</sequence>
<evidence type="ECO:0000250" key="1"/>
<evidence type="ECO:0000250" key="2">
    <source>
        <dbReference type="UniProtKB" id="E4QP00"/>
    </source>
</evidence>
<evidence type="ECO:0000255" key="3"/>
<evidence type="ECO:0000305" key="4"/>
<comment type="catalytic activity">
    <reaction>
        <text>(R)-mandelonitrile = benzaldehyde + hydrogen cyanide</text>
        <dbReference type="Rhea" id="RHEA:18313"/>
        <dbReference type="ChEBI" id="CHEBI:17169"/>
        <dbReference type="ChEBI" id="CHEBI:18407"/>
        <dbReference type="ChEBI" id="CHEBI:18450"/>
        <dbReference type="EC" id="4.1.2.10"/>
    </reaction>
</comment>
<comment type="cofactor">
    <cofactor evidence="1">
        <name>FAD</name>
        <dbReference type="ChEBI" id="CHEBI:57692"/>
    </cofactor>
</comment>
<comment type="subunit">
    <text evidence="1">Monomer.</text>
</comment>
<comment type="PTM">
    <text evidence="1">Glycosylated.</text>
</comment>
<comment type="similarity">
    <text evidence="4">Belongs to the GMC oxidoreductase family.</text>
</comment>
<reference key="1">
    <citation type="journal article" date="2000" name="Nature">
        <title>Sequence and analysis of chromosome 1 of the plant Arabidopsis thaliana.</title>
        <authorList>
            <person name="Theologis A."/>
            <person name="Ecker J.R."/>
            <person name="Palm C.J."/>
            <person name="Federspiel N.A."/>
            <person name="Kaul S."/>
            <person name="White O."/>
            <person name="Alonso J."/>
            <person name="Altafi H."/>
            <person name="Araujo R."/>
            <person name="Bowman C.L."/>
            <person name="Brooks S.Y."/>
            <person name="Buehler E."/>
            <person name="Chan A."/>
            <person name="Chao Q."/>
            <person name="Chen H."/>
            <person name="Cheuk R.F."/>
            <person name="Chin C.W."/>
            <person name="Chung M.K."/>
            <person name="Conn L."/>
            <person name="Conway A.B."/>
            <person name="Conway A.R."/>
            <person name="Creasy T.H."/>
            <person name="Dewar K."/>
            <person name="Dunn P."/>
            <person name="Etgu P."/>
            <person name="Feldblyum T.V."/>
            <person name="Feng J.-D."/>
            <person name="Fong B."/>
            <person name="Fujii C.Y."/>
            <person name="Gill J.E."/>
            <person name="Goldsmith A.D."/>
            <person name="Haas B."/>
            <person name="Hansen N.F."/>
            <person name="Hughes B."/>
            <person name="Huizar L."/>
            <person name="Hunter J.L."/>
            <person name="Jenkins J."/>
            <person name="Johnson-Hopson C."/>
            <person name="Khan S."/>
            <person name="Khaykin E."/>
            <person name="Kim C.J."/>
            <person name="Koo H.L."/>
            <person name="Kremenetskaia I."/>
            <person name="Kurtz D.B."/>
            <person name="Kwan A."/>
            <person name="Lam B."/>
            <person name="Langin-Hooper S."/>
            <person name="Lee A."/>
            <person name="Lee J.M."/>
            <person name="Lenz C.A."/>
            <person name="Li J.H."/>
            <person name="Li Y.-P."/>
            <person name="Lin X."/>
            <person name="Liu S.X."/>
            <person name="Liu Z.A."/>
            <person name="Luros J.S."/>
            <person name="Maiti R."/>
            <person name="Marziali A."/>
            <person name="Militscher J."/>
            <person name="Miranda M."/>
            <person name="Nguyen M."/>
            <person name="Nierman W.C."/>
            <person name="Osborne B.I."/>
            <person name="Pai G."/>
            <person name="Peterson J."/>
            <person name="Pham P.K."/>
            <person name="Rizzo M."/>
            <person name="Rooney T."/>
            <person name="Rowley D."/>
            <person name="Sakano H."/>
            <person name="Salzberg S.L."/>
            <person name="Schwartz J.R."/>
            <person name="Shinn P."/>
            <person name="Southwick A.M."/>
            <person name="Sun H."/>
            <person name="Tallon L.J."/>
            <person name="Tambunga G."/>
            <person name="Toriumi M.J."/>
            <person name="Town C.D."/>
            <person name="Utterback T."/>
            <person name="Van Aken S."/>
            <person name="Vaysberg M."/>
            <person name="Vysotskaia V.S."/>
            <person name="Walker M."/>
            <person name="Wu D."/>
            <person name="Yu G."/>
            <person name="Fraser C.M."/>
            <person name="Venter J.C."/>
            <person name="Davis R.W."/>
        </authorList>
    </citation>
    <scope>NUCLEOTIDE SEQUENCE [LARGE SCALE GENOMIC DNA]</scope>
    <source>
        <strain>cv. Columbia</strain>
    </source>
</reference>
<reference key="2">
    <citation type="journal article" date="2017" name="Plant J.">
        <title>Araport11: a complete reannotation of the Arabidopsis thaliana reference genome.</title>
        <authorList>
            <person name="Cheng C.Y."/>
            <person name="Krishnakumar V."/>
            <person name="Chan A.P."/>
            <person name="Thibaud-Nissen F."/>
            <person name="Schobel S."/>
            <person name="Town C.D."/>
        </authorList>
    </citation>
    <scope>GENOME REANNOTATION</scope>
    <source>
        <strain>cv. Columbia</strain>
    </source>
</reference>
<reference key="3">
    <citation type="journal article" date="2006" name="Plant Biotechnol. J.">
        <title>Simultaneous high-throughput recombinational cloning of open reading frames in closed and open configurations.</title>
        <authorList>
            <person name="Underwood B.A."/>
            <person name="Vanderhaeghen R."/>
            <person name="Whitford R."/>
            <person name="Town C.D."/>
            <person name="Hilson P."/>
        </authorList>
    </citation>
    <scope>NUCLEOTIDE SEQUENCE [LARGE SCALE MRNA]</scope>
    <source>
        <strain>cv. Columbia</strain>
    </source>
</reference>
<name>MDLL_ARATH</name>
<gene>
    <name type="ordered locus">At1g73050</name>
    <name type="ORF">F3N23.25</name>
</gene>
<accession>Q9SSM2</accession>
<accession>Q1PFE0</accession>